<accession>Q57MN2</accession>
<evidence type="ECO:0000255" key="1">
    <source>
        <dbReference type="HAMAP-Rule" id="MF_00146"/>
    </source>
</evidence>
<evidence type="ECO:0000256" key="2">
    <source>
        <dbReference type="SAM" id="MobiDB-lite"/>
    </source>
</evidence>
<keyword id="KW-0378">Hydrolase</keyword>
<keyword id="KW-0546">Nucleotide metabolism</keyword>
<keyword id="KW-0547">Nucleotide-binding</keyword>
<protein>
    <recommendedName>
        <fullName evidence="1">dCTP deaminase</fullName>
        <ecNumber evidence="1">3.5.4.13</ecNumber>
    </recommendedName>
    <alternativeName>
        <fullName evidence="1">Deoxycytidine triphosphate deaminase</fullName>
    </alternativeName>
</protein>
<reference key="1">
    <citation type="journal article" date="2005" name="Nucleic Acids Res.">
        <title>The genome sequence of Salmonella enterica serovar Choleraesuis, a highly invasive and resistant zoonotic pathogen.</title>
        <authorList>
            <person name="Chiu C.-H."/>
            <person name="Tang P."/>
            <person name="Chu C."/>
            <person name="Hu S."/>
            <person name="Bao Q."/>
            <person name="Yu J."/>
            <person name="Chou Y.-Y."/>
            <person name="Wang H.-S."/>
            <person name="Lee Y.-S."/>
        </authorList>
    </citation>
    <scope>NUCLEOTIDE SEQUENCE [LARGE SCALE GENOMIC DNA]</scope>
    <source>
        <strain>SC-B67</strain>
    </source>
</reference>
<feature type="chain" id="PRO_1000009804" description="dCTP deaminase">
    <location>
        <begin position="1"/>
        <end position="193"/>
    </location>
</feature>
<feature type="region of interest" description="Disordered" evidence="2">
    <location>
        <begin position="169"/>
        <end position="193"/>
    </location>
</feature>
<feature type="active site" description="Proton donor/acceptor" evidence="1">
    <location>
        <position position="138"/>
    </location>
</feature>
<feature type="binding site" evidence="1">
    <location>
        <begin position="110"/>
        <end position="115"/>
    </location>
    <ligand>
        <name>dCTP</name>
        <dbReference type="ChEBI" id="CHEBI:61481"/>
    </ligand>
</feature>
<feature type="binding site" evidence="1">
    <location>
        <position position="128"/>
    </location>
    <ligand>
        <name>dCTP</name>
        <dbReference type="ChEBI" id="CHEBI:61481"/>
    </ligand>
</feature>
<feature type="binding site" evidence="1">
    <location>
        <begin position="136"/>
        <end position="138"/>
    </location>
    <ligand>
        <name>dCTP</name>
        <dbReference type="ChEBI" id="CHEBI:61481"/>
    </ligand>
</feature>
<feature type="binding site" evidence="1">
    <location>
        <position position="171"/>
    </location>
    <ligand>
        <name>dCTP</name>
        <dbReference type="ChEBI" id="CHEBI:61481"/>
    </ligand>
</feature>
<feature type="binding site" evidence="1">
    <location>
        <position position="178"/>
    </location>
    <ligand>
        <name>dCTP</name>
        <dbReference type="ChEBI" id="CHEBI:61481"/>
    </ligand>
</feature>
<feature type="binding site" evidence="1">
    <location>
        <position position="182"/>
    </location>
    <ligand>
        <name>dCTP</name>
        <dbReference type="ChEBI" id="CHEBI:61481"/>
    </ligand>
</feature>
<name>DCD_SALCH</name>
<dbReference type="EC" id="3.5.4.13" evidence="1"/>
<dbReference type="EMBL" id="AE017220">
    <property type="protein sequence ID" value="AAX66029.1"/>
    <property type="molecule type" value="Genomic_DNA"/>
</dbReference>
<dbReference type="RefSeq" id="WP_001234783.1">
    <property type="nucleotide sequence ID" value="NC_006905.1"/>
</dbReference>
<dbReference type="SMR" id="Q57MN2"/>
<dbReference type="KEGG" id="sec:SCH_2123"/>
<dbReference type="HOGENOM" id="CLU_087476_2_0_6"/>
<dbReference type="UniPathway" id="UPA00610">
    <property type="reaction ID" value="UER00665"/>
</dbReference>
<dbReference type="Proteomes" id="UP000000538">
    <property type="component" value="Chromosome"/>
</dbReference>
<dbReference type="GO" id="GO:0008829">
    <property type="term" value="F:dCTP deaminase activity"/>
    <property type="evidence" value="ECO:0007669"/>
    <property type="project" value="UniProtKB-UniRule"/>
</dbReference>
<dbReference type="GO" id="GO:0000166">
    <property type="term" value="F:nucleotide binding"/>
    <property type="evidence" value="ECO:0007669"/>
    <property type="project" value="UniProtKB-KW"/>
</dbReference>
<dbReference type="GO" id="GO:0006226">
    <property type="term" value="P:dUMP biosynthetic process"/>
    <property type="evidence" value="ECO:0007669"/>
    <property type="project" value="UniProtKB-UniPathway"/>
</dbReference>
<dbReference type="GO" id="GO:0006229">
    <property type="term" value="P:dUTP biosynthetic process"/>
    <property type="evidence" value="ECO:0007669"/>
    <property type="project" value="UniProtKB-UniRule"/>
</dbReference>
<dbReference type="GO" id="GO:0015949">
    <property type="term" value="P:nucleobase-containing small molecule interconversion"/>
    <property type="evidence" value="ECO:0007669"/>
    <property type="project" value="TreeGrafter"/>
</dbReference>
<dbReference type="CDD" id="cd07557">
    <property type="entry name" value="trimeric_dUTPase"/>
    <property type="match status" value="1"/>
</dbReference>
<dbReference type="FunFam" id="2.70.40.10:FF:000003">
    <property type="entry name" value="dCTP deaminase"/>
    <property type="match status" value="1"/>
</dbReference>
<dbReference type="Gene3D" id="2.70.40.10">
    <property type="match status" value="1"/>
</dbReference>
<dbReference type="HAMAP" id="MF_00146">
    <property type="entry name" value="dCTP_deaminase"/>
    <property type="match status" value="1"/>
</dbReference>
<dbReference type="InterPro" id="IPR011962">
    <property type="entry name" value="dCTP_deaminase"/>
</dbReference>
<dbReference type="InterPro" id="IPR036157">
    <property type="entry name" value="dUTPase-like_sf"/>
</dbReference>
<dbReference type="InterPro" id="IPR033704">
    <property type="entry name" value="dUTPase_trimeric"/>
</dbReference>
<dbReference type="NCBIfam" id="TIGR02274">
    <property type="entry name" value="dCTP_deam"/>
    <property type="match status" value="1"/>
</dbReference>
<dbReference type="PANTHER" id="PTHR42680">
    <property type="entry name" value="DCTP DEAMINASE"/>
    <property type="match status" value="1"/>
</dbReference>
<dbReference type="PANTHER" id="PTHR42680:SF3">
    <property type="entry name" value="DCTP DEAMINASE"/>
    <property type="match status" value="1"/>
</dbReference>
<dbReference type="Pfam" id="PF22769">
    <property type="entry name" value="DCD"/>
    <property type="match status" value="1"/>
</dbReference>
<dbReference type="SUPFAM" id="SSF51283">
    <property type="entry name" value="dUTPase-like"/>
    <property type="match status" value="1"/>
</dbReference>
<proteinExistence type="inferred from homology"/>
<comment type="function">
    <text evidence="1">Catalyzes the deamination of dCTP to dUTP.</text>
</comment>
<comment type="catalytic activity">
    <reaction evidence="1">
        <text>dCTP + H2O + H(+) = dUTP + NH4(+)</text>
        <dbReference type="Rhea" id="RHEA:22680"/>
        <dbReference type="ChEBI" id="CHEBI:15377"/>
        <dbReference type="ChEBI" id="CHEBI:15378"/>
        <dbReference type="ChEBI" id="CHEBI:28938"/>
        <dbReference type="ChEBI" id="CHEBI:61481"/>
        <dbReference type="ChEBI" id="CHEBI:61555"/>
        <dbReference type="EC" id="3.5.4.13"/>
    </reaction>
</comment>
<comment type="pathway">
    <text evidence="1">Pyrimidine metabolism; dUMP biosynthesis; dUMP from dCTP (dUTP route): step 1/2.</text>
</comment>
<comment type="subunit">
    <text evidence="1">Homotrimer.</text>
</comment>
<comment type="similarity">
    <text evidence="1">Belongs to the dCTP deaminase family.</text>
</comment>
<organism>
    <name type="scientific">Salmonella choleraesuis (strain SC-B67)</name>
    <dbReference type="NCBI Taxonomy" id="321314"/>
    <lineage>
        <taxon>Bacteria</taxon>
        <taxon>Pseudomonadati</taxon>
        <taxon>Pseudomonadota</taxon>
        <taxon>Gammaproteobacteria</taxon>
        <taxon>Enterobacterales</taxon>
        <taxon>Enterobacteriaceae</taxon>
        <taxon>Salmonella</taxon>
    </lineage>
</organism>
<sequence>MRLCDRDIEAWLDEGRLSITPRPPVERINGATVDVRLGNKFRTFRGHTAAFIDLSGPKDEVSAALDRVMSDEIVLPDGEAFYLHPGELALAVTFESVTLPPDLVGWLDGRSSLARLGLMVHVTAHRIDPGWSGCIVLEFYNSGKLPLALRPGMLIGALSFEPLSGPAARPYNRRQDAKYRDQQGAVASRIDKD</sequence>
<gene>
    <name evidence="1" type="primary">dcd</name>
    <name type="ordered locus">SCH_2123</name>
</gene>